<name>NAGS_HUMAN</name>
<evidence type="ECO:0000250" key="1"/>
<evidence type="ECO:0000255" key="2"/>
<evidence type="ECO:0000255" key="3">
    <source>
        <dbReference type="PROSITE-ProRule" id="PRU00532"/>
    </source>
</evidence>
<evidence type="ECO:0000256" key="4">
    <source>
        <dbReference type="SAM" id="MobiDB-lite"/>
    </source>
</evidence>
<evidence type="ECO:0000269" key="5">
    <source>
    </source>
</evidence>
<evidence type="ECO:0000269" key="6">
    <source>
    </source>
</evidence>
<evidence type="ECO:0000269" key="7">
    <source>
    </source>
</evidence>
<evidence type="ECO:0000269" key="8">
    <source>
    </source>
</evidence>
<evidence type="ECO:0000269" key="9">
    <source>
    </source>
</evidence>
<evidence type="ECO:0000269" key="10">
    <source>
    </source>
</evidence>
<evidence type="ECO:0000305" key="11"/>
<evidence type="ECO:0000305" key="12">
    <source>
    </source>
</evidence>
<evidence type="ECO:0000305" key="13">
    <source>
    </source>
</evidence>
<evidence type="ECO:0007744" key="14">
    <source>
        <dbReference type="PDB" id="4K30"/>
    </source>
</evidence>
<evidence type="ECO:0007829" key="15">
    <source>
        <dbReference type="PDB" id="4K30"/>
    </source>
</evidence>
<comment type="function">
    <text evidence="5 8 10">Plays a role in the regulation of ureagenesis by producing the essential cofactor N-acetylglutamate (NAG), thus modulating carbamoylphosphate synthase I (CPS1) activity.</text>
</comment>
<comment type="catalytic activity">
    <reaction evidence="5 8 10">
        <text>L-glutamate + acetyl-CoA = N-acetyl-L-glutamate + CoA + H(+)</text>
        <dbReference type="Rhea" id="RHEA:24292"/>
        <dbReference type="ChEBI" id="CHEBI:15378"/>
        <dbReference type="ChEBI" id="CHEBI:29985"/>
        <dbReference type="ChEBI" id="CHEBI:44337"/>
        <dbReference type="ChEBI" id="CHEBI:57287"/>
        <dbReference type="ChEBI" id="CHEBI:57288"/>
        <dbReference type="EC" id="2.3.1.1"/>
    </reaction>
</comment>
<comment type="activity regulation">
    <text evidence="5 8">Increased by L-arginine.</text>
</comment>
<comment type="pathway">
    <text>Amino-acid biosynthesis; L-arginine biosynthesis; N(2)-acetyl-L-ornithine from L-glutamate: step 1/4.</text>
</comment>
<comment type="subunit">
    <text evidence="8">Homodimer. Homotetramer.</text>
</comment>
<comment type="subcellular location">
    <subcellularLocation>
        <location evidence="13">Mitochondrion matrix</location>
    </subcellularLocation>
</comment>
<comment type="tissue specificity">
    <text evidence="5 6">Highly expressed in the adult liver, kidney and small intestine. Weakly expressed in the fetal liver, lung, pancreas, placenta, heart and brain tissue.</text>
</comment>
<comment type="domain">
    <text evidence="12">The amino-acid kinase (AAK) domain mediates binding of the allosteric activator L-arginine.</text>
</comment>
<comment type="PTM">
    <text evidence="1">Probably processed by mitochondrial processing peptidase (MPP). The long form has not yet been isolated (By similarity).</text>
</comment>
<comment type="disease" evidence="6 7 9">
    <disease id="DI-02025">
        <name>N-acetylglutamate synthase deficiency</name>
        <acronym>NAGSD</acronym>
        <description>Rare autosomal recessively inherited metabolic disorder leading to severe neonatal or late-onset hyperammonemia without increased excretion of orotic acid. Clinical symptoms are somnolence, tachypnea, feeding difficulties, a severe neurologic presentation characterized by uncontrollable movements, developmental delay, visual impairment, failure to thrive and hyperammonemia precipitated by the introduction of high-protein diet or febrile illness.</description>
        <dbReference type="MIM" id="237310"/>
    </disease>
    <text>The disease is caused by variants affecting the gene represented in this entry.</text>
</comment>
<comment type="similarity">
    <text evidence="11">Belongs to the acetyltransferase family.</text>
</comment>
<comment type="online information" name="Wikipedia">
    <link uri="https://en.wikipedia.org/wiki/N-acetylglutamate_synthase"/>
    <text>N-acetylglutamate synthase entry</text>
</comment>
<reference key="1">
    <citation type="journal article" date="2003" name="Hum. Mutat.">
        <title>Mutation analysis in patients with N-acetylglutamate synthase deficiency.</title>
        <authorList>
            <person name="Haeberle J."/>
            <person name="Schmidt E."/>
            <person name="Pauli S."/>
            <person name="Kreuder J.G."/>
            <person name="Plecko B."/>
            <person name="Galler A."/>
            <person name="Wermuth B."/>
            <person name="Harms E."/>
            <person name="Koch H.G."/>
        </authorList>
    </citation>
    <scope>NUCLEOTIDE SEQUENCE [GENOMIC DNA / MRNA]</scope>
    <scope>TISSUE SPECIFICITY</scope>
    <scope>VARIANTS NAGSD PRO-279; PRO-430 AND ARG-484</scope>
</reference>
<reference key="2">
    <citation type="journal article" date="2004" name="Nat. Genet.">
        <title>Complete sequencing and characterization of 21,243 full-length human cDNAs.</title>
        <authorList>
            <person name="Ota T."/>
            <person name="Suzuki Y."/>
            <person name="Nishikawa T."/>
            <person name="Otsuki T."/>
            <person name="Sugiyama T."/>
            <person name="Irie R."/>
            <person name="Wakamatsu A."/>
            <person name="Hayashi K."/>
            <person name="Sato H."/>
            <person name="Nagai K."/>
            <person name="Kimura K."/>
            <person name="Makita H."/>
            <person name="Sekine M."/>
            <person name="Obayashi M."/>
            <person name="Nishi T."/>
            <person name="Shibahara T."/>
            <person name="Tanaka T."/>
            <person name="Ishii S."/>
            <person name="Yamamoto J."/>
            <person name="Saito K."/>
            <person name="Kawai Y."/>
            <person name="Isono Y."/>
            <person name="Nakamura Y."/>
            <person name="Nagahari K."/>
            <person name="Murakami K."/>
            <person name="Yasuda T."/>
            <person name="Iwayanagi T."/>
            <person name="Wagatsuma M."/>
            <person name="Shiratori A."/>
            <person name="Sudo H."/>
            <person name="Hosoiri T."/>
            <person name="Kaku Y."/>
            <person name="Kodaira H."/>
            <person name="Kondo H."/>
            <person name="Sugawara M."/>
            <person name="Takahashi M."/>
            <person name="Kanda K."/>
            <person name="Yokoi T."/>
            <person name="Furuya T."/>
            <person name="Kikkawa E."/>
            <person name="Omura Y."/>
            <person name="Abe K."/>
            <person name="Kamihara K."/>
            <person name="Katsuta N."/>
            <person name="Sato K."/>
            <person name="Tanikawa M."/>
            <person name="Yamazaki M."/>
            <person name="Ninomiya K."/>
            <person name="Ishibashi T."/>
            <person name="Yamashita H."/>
            <person name="Murakawa K."/>
            <person name="Fujimori K."/>
            <person name="Tanai H."/>
            <person name="Kimata M."/>
            <person name="Watanabe M."/>
            <person name="Hiraoka S."/>
            <person name="Chiba Y."/>
            <person name="Ishida S."/>
            <person name="Ono Y."/>
            <person name="Takiguchi S."/>
            <person name="Watanabe S."/>
            <person name="Yosida M."/>
            <person name="Hotuta T."/>
            <person name="Kusano J."/>
            <person name="Kanehori K."/>
            <person name="Takahashi-Fujii A."/>
            <person name="Hara H."/>
            <person name="Tanase T.-O."/>
            <person name="Nomura Y."/>
            <person name="Togiya S."/>
            <person name="Komai F."/>
            <person name="Hara R."/>
            <person name="Takeuchi K."/>
            <person name="Arita M."/>
            <person name="Imose N."/>
            <person name="Musashino K."/>
            <person name="Yuuki H."/>
            <person name="Oshima A."/>
            <person name="Sasaki N."/>
            <person name="Aotsuka S."/>
            <person name="Yoshikawa Y."/>
            <person name="Matsunawa H."/>
            <person name="Ichihara T."/>
            <person name="Shiohata N."/>
            <person name="Sano S."/>
            <person name="Moriya S."/>
            <person name="Momiyama H."/>
            <person name="Satoh N."/>
            <person name="Takami S."/>
            <person name="Terashima Y."/>
            <person name="Suzuki O."/>
            <person name="Nakagawa S."/>
            <person name="Senoh A."/>
            <person name="Mizoguchi H."/>
            <person name="Goto Y."/>
            <person name="Shimizu F."/>
            <person name="Wakebe H."/>
            <person name="Hishigaki H."/>
            <person name="Watanabe T."/>
            <person name="Sugiyama A."/>
            <person name="Takemoto M."/>
            <person name="Kawakami B."/>
            <person name="Yamazaki M."/>
            <person name="Watanabe K."/>
            <person name="Kumagai A."/>
            <person name="Itakura S."/>
            <person name="Fukuzumi Y."/>
            <person name="Fujimori Y."/>
            <person name="Komiyama M."/>
            <person name="Tashiro H."/>
            <person name="Tanigami A."/>
            <person name="Fujiwara T."/>
            <person name="Ono T."/>
            <person name="Yamada K."/>
            <person name="Fujii Y."/>
            <person name="Ozaki K."/>
            <person name="Hirao M."/>
            <person name="Ohmori Y."/>
            <person name="Kawabata A."/>
            <person name="Hikiji T."/>
            <person name="Kobatake N."/>
            <person name="Inagaki H."/>
            <person name="Ikema Y."/>
            <person name="Okamoto S."/>
            <person name="Okitani R."/>
            <person name="Kawakami T."/>
            <person name="Noguchi S."/>
            <person name="Itoh T."/>
            <person name="Shigeta K."/>
            <person name="Senba T."/>
            <person name="Matsumura K."/>
            <person name="Nakajima Y."/>
            <person name="Mizuno T."/>
            <person name="Morinaga M."/>
            <person name="Sasaki M."/>
            <person name="Togashi T."/>
            <person name="Oyama M."/>
            <person name="Hata H."/>
            <person name="Watanabe M."/>
            <person name="Komatsu T."/>
            <person name="Mizushima-Sugano J."/>
            <person name="Satoh T."/>
            <person name="Shirai Y."/>
            <person name="Takahashi Y."/>
            <person name="Nakagawa K."/>
            <person name="Okumura K."/>
            <person name="Nagase T."/>
            <person name="Nomura N."/>
            <person name="Kikuchi H."/>
            <person name="Masuho Y."/>
            <person name="Yamashita R."/>
            <person name="Nakai K."/>
            <person name="Yada T."/>
            <person name="Nakamura Y."/>
            <person name="Ohara O."/>
            <person name="Isogai T."/>
            <person name="Sugano S."/>
        </authorList>
    </citation>
    <scope>NUCLEOTIDE SEQUENCE [LARGE SCALE MRNA]</scope>
    <source>
        <tissue>Small intestine</tissue>
    </source>
</reference>
<reference key="3">
    <citation type="journal article" date="2002" name="Biochem. Biophys. Res. Commun.">
        <title>Cloning and expression of the human N-acetylglutamate synthase gene.</title>
        <authorList>
            <person name="Caldovic L."/>
            <person name="Morizono H."/>
            <person name="Gracia Panglao M."/>
            <person name="Gallegos R."/>
            <person name="Yu X."/>
            <person name="Shi D."/>
            <person name="Malamy M.H."/>
            <person name="Allewell N.M."/>
            <person name="Tuchman M."/>
        </authorList>
    </citation>
    <scope>NUCLEOTIDE SEQUENCE [MRNA] OF 94-534</scope>
    <scope>FUNCTION</scope>
    <scope>CATALYTIC ACTIVITY</scope>
    <scope>ACTIVITY REGULATION</scope>
    <scope>TISSUE SPECIFICITY</scope>
    <source>
        <tissue>Liver</tissue>
    </source>
</reference>
<reference key="4">
    <citation type="journal article" date="1982" name="Biochem. J.">
        <title>Purification and properties of acetyl-CoA:L-glutamate N-acetyltransferase from human liver.</title>
        <authorList>
            <person name="Bachmann C."/>
            <person name="Kraehenbuehl S."/>
            <person name="Colombo J.P."/>
        </authorList>
    </citation>
    <scope>FUNCTION</scope>
    <scope>CATALYTIC ACTIVITY</scope>
    <scope>SUBCELLULAR LOCATION</scope>
</reference>
<reference key="5">
    <citation type="journal article" date="2013" name="PLoS ONE">
        <title>Crystal structure of the N-acetyltransferase domain of human N-acetyl-L-glutamate synthase in complex with N-acetyl-L-glutamate provides insights into its catalytic and regulatory mechanisms.</title>
        <authorList>
            <person name="Zhao G."/>
            <person name="Jin Z."/>
            <person name="Allewell N.M."/>
            <person name="Tuchman M."/>
            <person name="Shi D."/>
        </authorList>
    </citation>
    <scope>X-RAY CRYSTALLOGRAPHY (2.1 ANGSTROMS) OF 377-534 IN COMPLEX WITH N-ACETYL-GLUTAMATE</scope>
    <scope>FUNCTION</scope>
    <scope>CATALYTIC ACTIVITY</scope>
    <scope>ACTIVITY REGULATION</scope>
    <scope>SUBSTRATE-BINDING SITES</scope>
    <scope>SUBUNIT</scope>
    <scope>DOMAIN</scope>
    <scope>MUTAGENESIS OF TYR-441; ASN-479 AND TYR-485</scope>
</reference>
<reference key="6">
    <citation type="journal article" date="2005" name="Biochim. Biophys. Acta">
        <title>Identification of novel mutations of the human N-acetylglutamate synthase gene and their functional investigation by expression studies.</title>
        <authorList>
            <person name="Schmidt E."/>
            <person name="Nuoffer J.-M."/>
            <person name="Haeberle J."/>
            <person name="Pauli S."/>
            <person name="Guffon N."/>
            <person name="Vianey-Saban C."/>
            <person name="Wermuth B."/>
            <person name="Koch H.G."/>
        </authorList>
    </citation>
    <scope>VARIANTS NAGSD ARG-200; PRO-410; PRO-430; ARG-484 AND THR-518</scope>
    <scope>CHARACTERIZATION OF VARIANTS NAGSD ARG-200; PRO-410; PRO-430; ARG-484 AND THR-518</scope>
</reference>
<reference key="7">
    <citation type="journal article" date="2016" name="Hum. Mutat.">
        <title>Understanding N-acetyl-L-glutamate synthase deficiency: mutational spectrum, impact of clinical mutations on enzyme functionality, and structural considerations.</title>
        <authorList>
            <person name="Sancho-Vaello E."/>
            <person name="Marco-Marin C."/>
            <person name="Gougeard N."/>
            <person name="Fernandez-Murga L."/>
            <person name="Ruefenacht V."/>
            <person name="Mustedanagic M."/>
            <person name="Rubio V."/>
            <person name="Haeberle J."/>
        </authorList>
    </citation>
    <scope>VARIANTS NAGSD VAL-167; LEU-260; MET-264; ASN-291; ARG-391; CYS-398; ASP-457 AND CYS-512</scope>
</reference>
<proteinExistence type="evidence at protein level"/>
<keyword id="KW-0002">3D-structure</keyword>
<keyword id="KW-0012">Acyltransferase</keyword>
<keyword id="KW-0225">Disease variant</keyword>
<keyword id="KW-0496">Mitochondrion</keyword>
<keyword id="KW-1267">Proteomics identification</keyword>
<keyword id="KW-1185">Reference proteome</keyword>
<keyword id="KW-0808">Transferase</keyword>
<keyword id="KW-0809">Transit peptide</keyword>
<keyword id="KW-0835">Urea cycle</keyword>
<accession>Q8N159</accession>
<accession>B2RAZ9</accession>
<accession>Q8IWR4</accession>
<feature type="transit peptide" description="Mitochondrion" evidence="2">
    <location>
        <begin position="1"/>
        <end position="18"/>
    </location>
</feature>
<feature type="chain" id="PRO_0000041930" description="N-acetylglutamate synthase long form" evidence="2">
    <location>
        <begin position="19"/>
        <end position="534"/>
    </location>
</feature>
<feature type="chain" id="PRO_0000041931" description="N-acetylglutamate synthase short form" evidence="1">
    <location>
        <begin position="51"/>
        <end position="534"/>
    </location>
</feature>
<feature type="chain" id="PRO_0000041932" description="N-acetylglutamate synthase conserved domain form" evidence="1">
    <location>
        <begin position="92"/>
        <end position="534"/>
    </location>
</feature>
<feature type="domain" description="N-acetyltransferase" evidence="3">
    <location>
        <begin position="375"/>
        <end position="526"/>
    </location>
</feature>
<feature type="region of interest" description="Amino-acid kinase domain (AAK)">
    <location>
        <begin position="19"/>
        <end position="376"/>
    </location>
</feature>
<feature type="region of interest" description="Disordered" evidence="4">
    <location>
        <begin position="19"/>
        <end position="99"/>
    </location>
</feature>
<feature type="compositionally biased region" description="Pro residues" evidence="4">
    <location>
        <begin position="81"/>
        <end position="96"/>
    </location>
</feature>
<feature type="binding site" evidence="8 14">
    <location>
        <position position="401"/>
    </location>
    <ligand>
        <name>substrate</name>
    </ligand>
</feature>
<feature type="binding site" evidence="8 14">
    <location>
        <position position="444"/>
    </location>
    <ligand>
        <name>substrate</name>
    </ligand>
</feature>
<feature type="binding site" evidence="8 14">
    <location>
        <begin position="474"/>
        <end position="479"/>
    </location>
    <ligand>
        <name>substrate</name>
    </ligand>
</feature>
<feature type="sequence variant" id="VAR_077329" description="In NAGSD; uncertain significance; dbSNP:rs760267963." evidence="9">
    <original>M</original>
    <variation>V</variation>
    <location>
        <position position="167"/>
    </location>
</feature>
<feature type="sequence variant" id="VAR_023505" description="In NAGSD; markedly decreases activity; dbSNP:rs1188223411." evidence="7">
    <original>C</original>
    <variation>R</variation>
    <location>
        <position position="200"/>
    </location>
</feature>
<feature type="sequence variant" id="VAR_077330" description="In NAGSD; uncertain significance." evidence="9">
    <original>P</original>
    <variation>L</variation>
    <location>
        <position position="260"/>
    </location>
</feature>
<feature type="sequence variant" id="VAR_077331" description="In NAGSD; uncertain significance; dbSNP:rs1251891037." evidence="9">
    <original>T</original>
    <variation>M</variation>
    <location>
        <position position="264"/>
    </location>
</feature>
<feature type="sequence variant" id="VAR_023506" description="In NAGSD." evidence="6">
    <original>A</original>
    <variation>P</variation>
    <location>
        <position position="279"/>
    </location>
</feature>
<feature type="sequence variant" id="VAR_077332" description="In NAGSD; uncertain significance." evidence="9">
    <original>I</original>
    <variation>N</variation>
    <location>
        <position position="291"/>
    </location>
</feature>
<feature type="sequence variant" id="VAR_077333" description="In NAGSD; uncertain significance." evidence="9">
    <original>L</original>
    <variation>R</variation>
    <location>
        <position position="391"/>
    </location>
</feature>
<feature type="sequence variant" id="VAR_077334" description="In NAGSD; uncertain significance; dbSNP:rs1312599995." evidence="9">
    <original>S</original>
    <variation>C</variation>
    <location>
        <position position="398"/>
    </location>
</feature>
<feature type="sequence variant" id="VAR_023507" description="In NAGSD; markedly decreases activity." evidence="7">
    <original>S</original>
    <variation>P</variation>
    <location>
        <position position="410"/>
    </location>
</feature>
<feature type="sequence variant" id="VAR_023508" description="In NAGSD; markedly decreases activity; dbSNP:rs104894605." evidence="6 7">
    <original>L</original>
    <variation>P</variation>
    <location>
        <position position="430"/>
    </location>
</feature>
<feature type="sequence variant" id="VAR_077335" description="In NAGSD; uncertain significance; dbSNP:rs1204011876." evidence="9">
    <original>G</original>
    <variation>D</variation>
    <location>
        <position position="457"/>
    </location>
</feature>
<feature type="sequence variant" id="VAR_023509" description="In NAGSD; markedly decreases activity; dbSNP:rs104894606." evidence="6 7">
    <original>W</original>
    <variation>R</variation>
    <location>
        <position position="484"/>
    </location>
</feature>
<feature type="sequence variant" id="VAR_077336" description="In NAGSD; uncertain significance; dbSNP:rs752415489." evidence="9">
    <original>Y</original>
    <variation>C</variation>
    <location>
        <position position="512"/>
    </location>
</feature>
<feature type="sequence variant" id="VAR_023510" description="In NAGSD; markedly decreases activity; dbSNP:rs745511282." evidence="7">
    <original>A</original>
    <variation>T</variation>
    <location>
        <position position="518"/>
    </location>
</feature>
<feature type="mutagenesis site" description="15% reduction in catalytic activity." evidence="8">
    <original>Y</original>
    <variation>F</variation>
    <location>
        <position position="441"/>
    </location>
</feature>
<feature type="mutagenesis site" description="7-fold reduction in catalytic activity." evidence="8">
    <original>N</original>
    <variation>A</variation>
    <location>
        <position position="479"/>
    </location>
</feature>
<feature type="mutagenesis site" description="10-fold reduction in catalytic activity." evidence="8">
    <original>Y</original>
    <variation>F</variation>
    <location>
        <position position="485"/>
    </location>
</feature>
<feature type="sequence conflict" description="In Ref. 3; AAN76451." evidence="11" ref="3">
    <original>E</original>
    <variation>M</variation>
    <location>
        <position position="94"/>
    </location>
</feature>
<feature type="strand" evidence="15">
    <location>
        <begin position="378"/>
        <end position="382"/>
    </location>
</feature>
<feature type="helix" evidence="15">
    <location>
        <begin position="383"/>
        <end position="385"/>
    </location>
</feature>
<feature type="helix" evidence="15">
    <location>
        <begin position="388"/>
        <end position="399"/>
    </location>
</feature>
<feature type="helix" evidence="15">
    <location>
        <begin position="407"/>
        <end position="411"/>
    </location>
</feature>
<feature type="helix" evidence="15">
    <location>
        <begin position="412"/>
        <end position="414"/>
    </location>
</feature>
<feature type="strand" evidence="15">
    <location>
        <begin position="415"/>
        <end position="420"/>
    </location>
</feature>
<feature type="strand" evidence="15">
    <location>
        <begin position="424"/>
        <end position="435"/>
    </location>
</feature>
<feature type="strand" evidence="15">
    <location>
        <begin position="438"/>
        <end position="447"/>
    </location>
</feature>
<feature type="helix" evidence="15">
    <location>
        <begin position="451"/>
        <end position="467"/>
    </location>
</feature>
<feature type="strand" evidence="15">
    <location>
        <begin position="471"/>
        <end position="476"/>
    </location>
</feature>
<feature type="helix" evidence="15">
    <location>
        <begin position="482"/>
        <end position="487"/>
    </location>
</feature>
<feature type="strand" evidence="15">
    <location>
        <begin position="489"/>
        <end position="494"/>
    </location>
</feature>
<feature type="strand" evidence="15">
    <location>
        <begin position="496"/>
        <end position="503"/>
    </location>
</feature>
<feature type="helix" evidence="15">
    <location>
        <begin position="508"/>
        <end position="510"/>
    </location>
</feature>
<feature type="helix" evidence="15">
    <location>
        <begin position="511"/>
        <end position="519"/>
    </location>
</feature>
<protein>
    <recommendedName>
        <fullName>N-acetylglutamate synthase, mitochondrial</fullName>
        <ecNumber evidence="5 8 10">2.3.1.1</ecNumber>
    </recommendedName>
    <alternativeName>
        <fullName>Amino-acid acetyltransferase</fullName>
    </alternativeName>
    <component>
        <recommendedName>
            <fullName>N-acetylglutamate synthase long form</fullName>
        </recommendedName>
    </component>
    <component>
        <recommendedName>
            <fullName>N-acetylglutamate synthase short form</fullName>
        </recommendedName>
    </component>
    <component>
        <recommendedName>
            <fullName>N-acetylglutamate synthase conserved domain form</fullName>
        </recommendedName>
    </component>
</protein>
<dbReference type="EC" id="2.3.1.1" evidence="5 8 10"/>
<dbReference type="EMBL" id="AY116537">
    <property type="protein sequence ID" value="AAM75385.1"/>
    <property type="molecule type" value="Genomic_DNA"/>
</dbReference>
<dbReference type="EMBL" id="AY116538">
    <property type="protein sequence ID" value="AAM75386.1"/>
    <property type="molecule type" value="mRNA"/>
</dbReference>
<dbReference type="EMBL" id="AK314432">
    <property type="protein sequence ID" value="BAG37046.1"/>
    <property type="molecule type" value="mRNA"/>
</dbReference>
<dbReference type="EMBL" id="AY158070">
    <property type="protein sequence ID" value="AAN76451.1"/>
    <property type="molecule type" value="mRNA"/>
</dbReference>
<dbReference type="CCDS" id="CCDS11473.1"/>
<dbReference type="RefSeq" id="NP_694551.1">
    <property type="nucleotide sequence ID" value="NM_153006.3"/>
</dbReference>
<dbReference type="PDB" id="4K30">
    <property type="method" value="X-ray"/>
    <property type="resolution" value="2.10 A"/>
    <property type="chains" value="A/B/X/Y=377-534"/>
</dbReference>
<dbReference type="PDBsum" id="4K30"/>
<dbReference type="SMR" id="Q8N159"/>
<dbReference type="BioGRID" id="127816">
    <property type="interactions" value="12"/>
</dbReference>
<dbReference type="FunCoup" id="Q8N159">
    <property type="interactions" value="407"/>
</dbReference>
<dbReference type="IntAct" id="Q8N159">
    <property type="interactions" value="7"/>
</dbReference>
<dbReference type="STRING" id="9606.ENSP00000293404"/>
<dbReference type="DrugBank" id="DB09326">
    <property type="generic name" value="Ammonia N-13"/>
</dbReference>
<dbReference type="DrugBank" id="DB00142">
    <property type="generic name" value="Glutamic acid"/>
</dbReference>
<dbReference type="iPTMnet" id="Q8N159"/>
<dbReference type="PhosphoSitePlus" id="Q8N159"/>
<dbReference type="BioMuta" id="NAGS"/>
<dbReference type="DMDM" id="74714699"/>
<dbReference type="jPOST" id="Q8N159"/>
<dbReference type="MassIVE" id="Q8N159"/>
<dbReference type="PaxDb" id="9606-ENSP00000293404"/>
<dbReference type="PeptideAtlas" id="Q8N159"/>
<dbReference type="ProteomicsDB" id="71564"/>
<dbReference type="Antibodypedia" id="29652">
    <property type="antibodies" value="80 antibodies from 23 providers"/>
</dbReference>
<dbReference type="DNASU" id="162417"/>
<dbReference type="Ensembl" id="ENST00000293404.8">
    <property type="protein sequence ID" value="ENSP00000293404.2"/>
    <property type="gene ID" value="ENSG00000161653.11"/>
</dbReference>
<dbReference type="GeneID" id="162417"/>
<dbReference type="KEGG" id="hsa:162417"/>
<dbReference type="MANE-Select" id="ENST00000293404.8">
    <property type="protein sequence ID" value="ENSP00000293404.2"/>
    <property type="RefSeq nucleotide sequence ID" value="NM_153006.3"/>
    <property type="RefSeq protein sequence ID" value="NP_694551.1"/>
</dbReference>
<dbReference type="UCSC" id="uc002ies.4">
    <property type="organism name" value="human"/>
</dbReference>
<dbReference type="AGR" id="HGNC:17996"/>
<dbReference type="CTD" id="162417"/>
<dbReference type="DisGeNET" id="162417"/>
<dbReference type="GeneCards" id="NAGS"/>
<dbReference type="GeneReviews" id="NAGS"/>
<dbReference type="HGNC" id="HGNC:17996">
    <property type="gene designation" value="NAGS"/>
</dbReference>
<dbReference type="HPA" id="ENSG00000161653">
    <property type="expression patterns" value="Group enriched (intestine, liver)"/>
</dbReference>
<dbReference type="MalaCards" id="NAGS"/>
<dbReference type="MIM" id="237310">
    <property type="type" value="phenotype"/>
</dbReference>
<dbReference type="MIM" id="608300">
    <property type="type" value="gene"/>
</dbReference>
<dbReference type="neXtProt" id="NX_Q8N159"/>
<dbReference type="OpenTargets" id="ENSG00000161653"/>
<dbReference type="Orphanet" id="927">
    <property type="disease" value="Hyperammonemia due to N-acetylglutamate synthase deficiency"/>
</dbReference>
<dbReference type="PharmGKB" id="PA134968729"/>
<dbReference type="VEuPathDB" id="HostDB:ENSG00000161653"/>
<dbReference type="eggNOG" id="KOG2436">
    <property type="taxonomic scope" value="Eukaryota"/>
</dbReference>
<dbReference type="GeneTree" id="ENSGT00390000005602"/>
<dbReference type="InParanoid" id="Q8N159"/>
<dbReference type="OMA" id="FQTCYHS"/>
<dbReference type="OrthoDB" id="438291at2759"/>
<dbReference type="PAN-GO" id="Q8N159">
    <property type="GO annotations" value="4 GO annotations based on evolutionary models"/>
</dbReference>
<dbReference type="PhylomeDB" id="Q8N159"/>
<dbReference type="TreeFam" id="TF332628"/>
<dbReference type="BRENDA" id="2.3.1.1">
    <property type="organism ID" value="2681"/>
</dbReference>
<dbReference type="PathwayCommons" id="Q8N159"/>
<dbReference type="Reactome" id="R-HSA-70635">
    <property type="pathway name" value="Urea cycle"/>
</dbReference>
<dbReference type="SignaLink" id="Q8N159"/>
<dbReference type="UniPathway" id="UPA00068">
    <property type="reaction ID" value="UER00106"/>
</dbReference>
<dbReference type="BioGRID-ORCS" id="162417">
    <property type="hits" value="14 hits in 1167 CRISPR screens"/>
</dbReference>
<dbReference type="ChiTaRS" id="NAGS">
    <property type="organism name" value="human"/>
</dbReference>
<dbReference type="EvolutionaryTrace" id="Q8N159"/>
<dbReference type="GenomeRNAi" id="162417"/>
<dbReference type="Pharos" id="Q8N159">
    <property type="development level" value="Tbio"/>
</dbReference>
<dbReference type="PRO" id="PR:Q8N159"/>
<dbReference type="Proteomes" id="UP000005640">
    <property type="component" value="Chromosome 17"/>
</dbReference>
<dbReference type="RNAct" id="Q8N159">
    <property type="molecule type" value="protein"/>
</dbReference>
<dbReference type="Bgee" id="ENSG00000161653">
    <property type="expression patterns" value="Expressed in ileal mucosa and 98 other cell types or tissues"/>
</dbReference>
<dbReference type="ExpressionAtlas" id="Q8N159">
    <property type="expression patterns" value="baseline and differential"/>
</dbReference>
<dbReference type="GO" id="GO:0005759">
    <property type="term" value="C:mitochondrial matrix"/>
    <property type="evidence" value="ECO:0000318"/>
    <property type="project" value="GO_Central"/>
</dbReference>
<dbReference type="GO" id="GO:0005739">
    <property type="term" value="C:mitochondrion"/>
    <property type="evidence" value="ECO:0000314"/>
    <property type="project" value="UniProtKB"/>
</dbReference>
<dbReference type="GO" id="GO:0004042">
    <property type="term" value="F:L-glutamate N-acetyltransferase activity"/>
    <property type="evidence" value="ECO:0000314"/>
    <property type="project" value="UniProtKB"/>
</dbReference>
<dbReference type="GO" id="GO:0006536">
    <property type="term" value="P:glutamate metabolic process"/>
    <property type="evidence" value="ECO:0000318"/>
    <property type="project" value="GO_Central"/>
</dbReference>
<dbReference type="GO" id="GO:0006526">
    <property type="term" value="P:L-arginine biosynthetic process"/>
    <property type="evidence" value="ECO:0000318"/>
    <property type="project" value="GO_Central"/>
</dbReference>
<dbReference type="GO" id="GO:0000050">
    <property type="term" value="P:urea cycle"/>
    <property type="evidence" value="ECO:0000304"/>
    <property type="project" value="Reactome"/>
</dbReference>
<dbReference type="CDD" id="cd04236">
    <property type="entry name" value="AAK_NAGS-Urea"/>
    <property type="match status" value="1"/>
</dbReference>
<dbReference type="CDD" id="cd04265">
    <property type="entry name" value="DUF619-NAGS-U"/>
    <property type="match status" value="1"/>
</dbReference>
<dbReference type="FunFam" id="3.40.1160.10:FF:000026">
    <property type="entry name" value="N-acetylglutamate synthase, mitochondrial"/>
    <property type="match status" value="1"/>
</dbReference>
<dbReference type="FunFam" id="3.40.630.30:FF:000045">
    <property type="entry name" value="N-acetylglutamate synthase, mitochondrial"/>
    <property type="match status" value="1"/>
</dbReference>
<dbReference type="Gene3D" id="3.40.630.30">
    <property type="match status" value="1"/>
</dbReference>
<dbReference type="Gene3D" id="3.40.1160.10">
    <property type="entry name" value="Acetylglutamate kinase-like"/>
    <property type="match status" value="1"/>
</dbReference>
<dbReference type="InterPro" id="IPR036393">
    <property type="entry name" value="AceGlu_kinase-like_sf"/>
</dbReference>
<dbReference type="InterPro" id="IPR016181">
    <property type="entry name" value="Acyl_CoA_acyltransferase"/>
</dbReference>
<dbReference type="InterPro" id="IPR001048">
    <property type="entry name" value="Asp/Glu/Uridylate_kinase"/>
</dbReference>
<dbReference type="InterPro" id="IPR011243">
    <property type="entry name" value="GlcNAc_Synth_met"/>
</dbReference>
<dbReference type="InterPro" id="IPR000182">
    <property type="entry name" value="GNAT_dom"/>
</dbReference>
<dbReference type="InterPro" id="IPR006855">
    <property type="entry name" value="Vertebrate-like_GNAT_dom"/>
</dbReference>
<dbReference type="PANTHER" id="PTHR23342">
    <property type="entry name" value="N-ACETYLGLUTAMATE SYNTHASE"/>
    <property type="match status" value="1"/>
</dbReference>
<dbReference type="PANTHER" id="PTHR23342:SF0">
    <property type="entry name" value="N-ACETYLGLUTAMATE SYNTHASE, MITOCHONDRIAL"/>
    <property type="match status" value="1"/>
</dbReference>
<dbReference type="Pfam" id="PF00696">
    <property type="entry name" value="AA_kinase"/>
    <property type="match status" value="1"/>
</dbReference>
<dbReference type="Pfam" id="PF04768">
    <property type="entry name" value="NAT"/>
    <property type="match status" value="1"/>
</dbReference>
<dbReference type="PIRSF" id="PIRSF036442">
    <property type="entry name" value="NAGS_animal"/>
    <property type="match status" value="1"/>
</dbReference>
<dbReference type="SUPFAM" id="SSF55729">
    <property type="entry name" value="Acyl-CoA N-acyltransferases (Nat)"/>
    <property type="match status" value="1"/>
</dbReference>
<dbReference type="SUPFAM" id="SSF53633">
    <property type="entry name" value="Carbamate kinase-like"/>
    <property type="match status" value="1"/>
</dbReference>
<dbReference type="PROSITE" id="PS51731">
    <property type="entry name" value="GNAT_NAGS"/>
    <property type="match status" value="1"/>
</dbReference>
<organism>
    <name type="scientific">Homo sapiens</name>
    <name type="common">Human</name>
    <dbReference type="NCBI Taxonomy" id="9606"/>
    <lineage>
        <taxon>Eukaryota</taxon>
        <taxon>Metazoa</taxon>
        <taxon>Chordata</taxon>
        <taxon>Craniata</taxon>
        <taxon>Vertebrata</taxon>
        <taxon>Euteleostomi</taxon>
        <taxon>Mammalia</taxon>
        <taxon>Eutheria</taxon>
        <taxon>Euarchontoglires</taxon>
        <taxon>Primates</taxon>
        <taxon>Haplorrhini</taxon>
        <taxon>Catarrhini</taxon>
        <taxon>Hominidae</taxon>
        <taxon>Homo</taxon>
    </lineage>
</organism>
<sequence length="534" mass="58156">MATALMAVVLRAAAVAPRLRGRGGTGGARRLSCGARRRAARGTSPGRRLSTAWSQPQPPPEEYAGADDVSQSPVAEEPSWVPSPRPPVPHESPEPPSGRSLVQRDIQAFLNQCGASPGEARHWLTQFQTCHHSADKPFAVIEVDEEVLKCQQGVSSLAFALAFLQRMDMKPLVVLGLPAPTAPSGCLSFWEAKAQLAKSCKVLVDALRHNAAAAVPFFGGGSVLRAAEPAPHASYGGIVSVETDLLQWCLESGSIPILCPIGETAARRSVLLDSLEVTASLAKALRPTKIIFLNNTGGLRDSSHKVLSNVNLPADLDLVCNAEWVSTKERQQMRLIVDVLSRLPHHSSAVITAASTLLTELFSNKGSGTLFKNAERMLRVRSLDKLDQGRLVDLVNASFGKKLRDDYLASLRPRLHSIYVSEGYNAAAILTMEPVLGGTPYLDKFVVSSSRQGQGSGQMLWECLRRDLQTLFWRSRVTNPINPWYFKHSDGSFSNKQWIFFWFGLADIRDSYELVNHAKGLPDSFHKPASDPGS</sequence>
<gene>
    <name type="primary">NAGS</name>
</gene>